<dbReference type="EMBL" id="AM180355">
    <property type="protein sequence ID" value="CAJ66884.1"/>
    <property type="molecule type" value="Genomic_DNA"/>
</dbReference>
<dbReference type="RefSeq" id="WP_003421180.1">
    <property type="nucleotide sequence ID" value="NZ_JAUPES010000049.1"/>
</dbReference>
<dbReference type="RefSeq" id="YP_001086533.1">
    <property type="nucleotide sequence ID" value="NC_009089.1"/>
</dbReference>
<dbReference type="SMR" id="Q18CF5"/>
<dbReference type="STRING" id="272563.CD630_00690"/>
<dbReference type="EnsemblBacteria" id="CAJ66884">
    <property type="protein sequence ID" value="CAJ66884"/>
    <property type="gene ID" value="CD630_00690"/>
</dbReference>
<dbReference type="GeneID" id="66352567"/>
<dbReference type="KEGG" id="cdf:CD630_00690"/>
<dbReference type="KEGG" id="pdc:CDIF630_00135"/>
<dbReference type="PATRIC" id="fig|272563.120.peg.75"/>
<dbReference type="eggNOG" id="COG0049">
    <property type="taxonomic scope" value="Bacteria"/>
</dbReference>
<dbReference type="OrthoDB" id="9807653at2"/>
<dbReference type="PhylomeDB" id="Q18CF5"/>
<dbReference type="BioCyc" id="PDIF272563:G12WB-123-MONOMER"/>
<dbReference type="Proteomes" id="UP000001978">
    <property type="component" value="Chromosome"/>
</dbReference>
<dbReference type="GO" id="GO:0015935">
    <property type="term" value="C:small ribosomal subunit"/>
    <property type="evidence" value="ECO:0007669"/>
    <property type="project" value="InterPro"/>
</dbReference>
<dbReference type="GO" id="GO:0019843">
    <property type="term" value="F:rRNA binding"/>
    <property type="evidence" value="ECO:0007669"/>
    <property type="project" value="UniProtKB-UniRule"/>
</dbReference>
<dbReference type="GO" id="GO:0003735">
    <property type="term" value="F:structural constituent of ribosome"/>
    <property type="evidence" value="ECO:0007669"/>
    <property type="project" value="InterPro"/>
</dbReference>
<dbReference type="GO" id="GO:0000049">
    <property type="term" value="F:tRNA binding"/>
    <property type="evidence" value="ECO:0007669"/>
    <property type="project" value="UniProtKB-UniRule"/>
</dbReference>
<dbReference type="GO" id="GO:0006412">
    <property type="term" value="P:translation"/>
    <property type="evidence" value="ECO:0007669"/>
    <property type="project" value="UniProtKB-UniRule"/>
</dbReference>
<dbReference type="CDD" id="cd14869">
    <property type="entry name" value="uS7_Bacteria"/>
    <property type="match status" value="1"/>
</dbReference>
<dbReference type="FunFam" id="1.10.455.10:FF:000001">
    <property type="entry name" value="30S ribosomal protein S7"/>
    <property type="match status" value="1"/>
</dbReference>
<dbReference type="Gene3D" id="1.10.455.10">
    <property type="entry name" value="Ribosomal protein S7 domain"/>
    <property type="match status" value="1"/>
</dbReference>
<dbReference type="HAMAP" id="MF_00480_B">
    <property type="entry name" value="Ribosomal_uS7_B"/>
    <property type="match status" value="1"/>
</dbReference>
<dbReference type="InterPro" id="IPR000235">
    <property type="entry name" value="Ribosomal_uS7"/>
</dbReference>
<dbReference type="InterPro" id="IPR005717">
    <property type="entry name" value="Ribosomal_uS7_bac/org-type"/>
</dbReference>
<dbReference type="InterPro" id="IPR020606">
    <property type="entry name" value="Ribosomal_uS7_CS"/>
</dbReference>
<dbReference type="InterPro" id="IPR023798">
    <property type="entry name" value="Ribosomal_uS7_dom"/>
</dbReference>
<dbReference type="InterPro" id="IPR036823">
    <property type="entry name" value="Ribosomal_uS7_dom_sf"/>
</dbReference>
<dbReference type="NCBIfam" id="TIGR01029">
    <property type="entry name" value="rpsG_bact"/>
    <property type="match status" value="1"/>
</dbReference>
<dbReference type="PANTHER" id="PTHR11205">
    <property type="entry name" value="RIBOSOMAL PROTEIN S7"/>
    <property type="match status" value="1"/>
</dbReference>
<dbReference type="Pfam" id="PF00177">
    <property type="entry name" value="Ribosomal_S7"/>
    <property type="match status" value="1"/>
</dbReference>
<dbReference type="PIRSF" id="PIRSF002122">
    <property type="entry name" value="RPS7p_RPS7a_RPS5e_RPS7o"/>
    <property type="match status" value="1"/>
</dbReference>
<dbReference type="SUPFAM" id="SSF47973">
    <property type="entry name" value="Ribosomal protein S7"/>
    <property type="match status" value="1"/>
</dbReference>
<dbReference type="PROSITE" id="PS00052">
    <property type="entry name" value="RIBOSOMAL_S7"/>
    <property type="match status" value="1"/>
</dbReference>
<evidence type="ECO:0000255" key="1">
    <source>
        <dbReference type="HAMAP-Rule" id="MF_00480"/>
    </source>
</evidence>
<evidence type="ECO:0000305" key="2"/>
<feature type="chain" id="PRO_1000014178" description="Small ribosomal subunit protein uS7">
    <location>
        <begin position="1"/>
        <end position="156"/>
    </location>
</feature>
<keyword id="KW-1185">Reference proteome</keyword>
<keyword id="KW-0687">Ribonucleoprotein</keyword>
<keyword id="KW-0689">Ribosomal protein</keyword>
<keyword id="KW-0694">RNA-binding</keyword>
<keyword id="KW-0699">rRNA-binding</keyword>
<keyword id="KW-0820">tRNA-binding</keyword>
<sequence length="156" mass="17672">MPRKGNIPKREVLPDPMYGSKVVTKLINNLMVDGKKGKSQRIVYDAFAIVAEKTGEEALEVFNKAMDNIMPVLEVKARRVGGANYQVPIEVRPERRQTLGLRWLVKYTRARGEKGMVEKLAKEIMDAANNTGASVKKKEDTHKMAEANKAFAHYRW</sequence>
<reference key="1">
    <citation type="journal article" date="2006" name="Nat. Genet.">
        <title>The multidrug-resistant human pathogen Clostridium difficile has a highly mobile, mosaic genome.</title>
        <authorList>
            <person name="Sebaihia M."/>
            <person name="Wren B.W."/>
            <person name="Mullany P."/>
            <person name="Fairweather N.F."/>
            <person name="Minton N."/>
            <person name="Stabler R."/>
            <person name="Thomson N.R."/>
            <person name="Roberts A.P."/>
            <person name="Cerdeno-Tarraga A.M."/>
            <person name="Wang H."/>
            <person name="Holden M.T.G."/>
            <person name="Wright A."/>
            <person name="Churcher C."/>
            <person name="Quail M.A."/>
            <person name="Baker S."/>
            <person name="Bason N."/>
            <person name="Brooks K."/>
            <person name="Chillingworth T."/>
            <person name="Cronin A."/>
            <person name="Davis P."/>
            <person name="Dowd L."/>
            <person name="Fraser A."/>
            <person name="Feltwell T."/>
            <person name="Hance Z."/>
            <person name="Holroyd S."/>
            <person name="Jagels K."/>
            <person name="Moule S."/>
            <person name="Mungall K."/>
            <person name="Price C."/>
            <person name="Rabbinowitsch E."/>
            <person name="Sharp S."/>
            <person name="Simmonds M."/>
            <person name="Stevens K."/>
            <person name="Unwin L."/>
            <person name="Whithead S."/>
            <person name="Dupuy B."/>
            <person name="Dougan G."/>
            <person name="Barrell B."/>
            <person name="Parkhill J."/>
        </authorList>
    </citation>
    <scope>NUCLEOTIDE SEQUENCE [LARGE SCALE GENOMIC DNA]</scope>
    <source>
        <strain>630</strain>
    </source>
</reference>
<protein>
    <recommendedName>
        <fullName evidence="1">Small ribosomal subunit protein uS7</fullName>
    </recommendedName>
    <alternativeName>
        <fullName evidence="2">30S ribosomal protein S7</fullName>
    </alternativeName>
</protein>
<accession>Q18CF5</accession>
<name>RS7_CLOD6</name>
<proteinExistence type="inferred from homology"/>
<organism>
    <name type="scientific">Clostridioides difficile (strain 630)</name>
    <name type="common">Peptoclostridium difficile</name>
    <dbReference type="NCBI Taxonomy" id="272563"/>
    <lineage>
        <taxon>Bacteria</taxon>
        <taxon>Bacillati</taxon>
        <taxon>Bacillota</taxon>
        <taxon>Clostridia</taxon>
        <taxon>Peptostreptococcales</taxon>
        <taxon>Peptostreptococcaceae</taxon>
        <taxon>Clostridioides</taxon>
    </lineage>
</organism>
<comment type="function">
    <text evidence="1">One of the primary rRNA binding proteins, it binds directly to 16S rRNA where it nucleates assembly of the head domain of the 30S subunit. Is located at the subunit interface close to the decoding center, probably blocks exit of the E-site tRNA.</text>
</comment>
<comment type="subunit">
    <text evidence="1">Part of the 30S ribosomal subunit. Contacts proteins S9 and S11.</text>
</comment>
<comment type="similarity">
    <text evidence="1">Belongs to the universal ribosomal protein uS7 family.</text>
</comment>
<gene>
    <name evidence="1" type="primary">rpsG</name>
    <name type="ordered locus">CD630_00690</name>
</gene>